<sequence>MSVVVRHDWDRKELQALFDLPFPELLHRAASVHRAHFDPAQVQVSTLLSVKTGGCPEDCAYCPQAQRYDTGVSAQKLMETEEVVAKARQAKAAGASRFCMGAAWRSPKERDIPKVAAMIREVKAMGLETCATLGMLDAGQARALKDAGLDYYNHNLDTAPDYYDSIIHTRQYQDRLNTLEHVRDVGLKTCCGGIVGMGETREHRVGLLLALATLPAHPDSVPINQLVQVPGTPLHGTQQLDPFEFVRMIAVARIAMPKSMVRLSAGREAMSDELQALCFLAGANSIFYGEKLLTTGNPDTERDQALFQRLGLRPMQITVDAAEHDHPGTVHAEITRSAACEHAA</sequence>
<feature type="chain" id="PRO_0000381707" description="Biotin synthase">
    <location>
        <begin position="1"/>
        <end position="344"/>
    </location>
</feature>
<feature type="domain" description="Radical SAM core" evidence="2">
    <location>
        <begin position="40"/>
        <end position="267"/>
    </location>
</feature>
<feature type="binding site" evidence="1">
    <location>
        <position position="55"/>
    </location>
    <ligand>
        <name>[4Fe-4S] cluster</name>
        <dbReference type="ChEBI" id="CHEBI:49883"/>
        <note>4Fe-4S-S-AdoMet</note>
    </ligand>
</feature>
<feature type="binding site" evidence="1">
    <location>
        <position position="59"/>
    </location>
    <ligand>
        <name>[4Fe-4S] cluster</name>
        <dbReference type="ChEBI" id="CHEBI:49883"/>
        <note>4Fe-4S-S-AdoMet</note>
    </ligand>
</feature>
<feature type="binding site" evidence="1">
    <location>
        <position position="62"/>
    </location>
    <ligand>
        <name>[4Fe-4S] cluster</name>
        <dbReference type="ChEBI" id="CHEBI:49883"/>
        <note>4Fe-4S-S-AdoMet</note>
    </ligand>
</feature>
<feature type="binding site" evidence="1">
    <location>
        <position position="99"/>
    </location>
    <ligand>
        <name>[2Fe-2S] cluster</name>
        <dbReference type="ChEBI" id="CHEBI:190135"/>
    </ligand>
</feature>
<feature type="binding site" evidence="1">
    <location>
        <position position="130"/>
    </location>
    <ligand>
        <name>[2Fe-2S] cluster</name>
        <dbReference type="ChEBI" id="CHEBI:190135"/>
    </ligand>
</feature>
<feature type="binding site" evidence="1">
    <location>
        <position position="190"/>
    </location>
    <ligand>
        <name>[2Fe-2S] cluster</name>
        <dbReference type="ChEBI" id="CHEBI:190135"/>
    </ligand>
</feature>
<feature type="binding site" evidence="1">
    <location>
        <position position="262"/>
    </location>
    <ligand>
        <name>[2Fe-2S] cluster</name>
        <dbReference type="ChEBI" id="CHEBI:190135"/>
    </ligand>
</feature>
<reference key="1">
    <citation type="journal article" date="2005" name="J. Bacteriol.">
        <title>Insights into genome plasticity and pathogenicity of the plant pathogenic Bacterium Xanthomonas campestris pv. vesicatoria revealed by the complete genome sequence.</title>
        <authorList>
            <person name="Thieme F."/>
            <person name="Koebnik R."/>
            <person name="Bekel T."/>
            <person name="Berger C."/>
            <person name="Boch J."/>
            <person name="Buettner D."/>
            <person name="Caldana C."/>
            <person name="Gaigalat L."/>
            <person name="Goesmann A."/>
            <person name="Kay S."/>
            <person name="Kirchner O."/>
            <person name="Lanz C."/>
            <person name="Linke B."/>
            <person name="McHardy A.C."/>
            <person name="Meyer F."/>
            <person name="Mittenhuber G."/>
            <person name="Nies D.H."/>
            <person name="Niesbach-Kloesgen U."/>
            <person name="Patschkowski T."/>
            <person name="Rueckert C."/>
            <person name="Rupp O."/>
            <person name="Schneiker S."/>
            <person name="Schuster S.C."/>
            <person name="Vorhoelter F.J."/>
            <person name="Weber E."/>
            <person name="Puehler A."/>
            <person name="Bonas U."/>
            <person name="Bartels D."/>
            <person name="Kaiser O."/>
        </authorList>
    </citation>
    <scope>NUCLEOTIDE SEQUENCE [LARGE SCALE GENOMIC DNA]</scope>
    <source>
        <strain>85-10</strain>
    </source>
</reference>
<accession>Q3BYM9</accession>
<organism>
    <name type="scientific">Xanthomonas euvesicatoria pv. vesicatoria (strain 85-10)</name>
    <name type="common">Xanthomonas campestris pv. vesicatoria</name>
    <dbReference type="NCBI Taxonomy" id="316273"/>
    <lineage>
        <taxon>Bacteria</taxon>
        <taxon>Pseudomonadati</taxon>
        <taxon>Pseudomonadota</taxon>
        <taxon>Gammaproteobacteria</taxon>
        <taxon>Lysobacterales</taxon>
        <taxon>Lysobacteraceae</taxon>
        <taxon>Xanthomonas</taxon>
    </lineage>
</organism>
<proteinExistence type="inferred from homology"/>
<dbReference type="EC" id="2.8.1.6" evidence="1"/>
<dbReference type="EMBL" id="AM039952">
    <property type="protein sequence ID" value="CAJ22034.1"/>
    <property type="molecule type" value="Genomic_DNA"/>
</dbReference>
<dbReference type="RefSeq" id="WP_005912728.1">
    <property type="nucleotide sequence ID" value="NZ_CP017190.1"/>
</dbReference>
<dbReference type="SMR" id="Q3BYM9"/>
<dbReference type="STRING" id="456327.BJD11_20855"/>
<dbReference type="KEGG" id="xcv:XCV0403"/>
<dbReference type="eggNOG" id="COG0502">
    <property type="taxonomic scope" value="Bacteria"/>
</dbReference>
<dbReference type="HOGENOM" id="CLU_033172_1_2_6"/>
<dbReference type="UniPathway" id="UPA00078">
    <property type="reaction ID" value="UER00162"/>
</dbReference>
<dbReference type="Proteomes" id="UP000007069">
    <property type="component" value="Chromosome"/>
</dbReference>
<dbReference type="GO" id="GO:0051537">
    <property type="term" value="F:2 iron, 2 sulfur cluster binding"/>
    <property type="evidence" value="ECO:0007669"/>
    <property type="project" value="UniProtKB-KW"/>
</dbReference>
<dbReference type="GO" id="GO:0051539">
    <property type="term" value="F:4 iron, 4 sulfur cluster binding"/>
    <property type="evidence" value="ECO:0007669"/>
    <property type="project" value="UniProtKB-KW"/>
</dbReference>
<dbReference type="GO" id="GO:0004076">
    <property type="term" value="F:biotin synthase activity"/>
    <property type="evidence" value="ECO:0007669"/>
    <property type="project" value="UniProtKB-UniRule"/>
</dbReference>
<dbReference type="GO" id="GO:0005506">
    <property type="term" value="F:iron ion binding"/>
    <property type="evidence" value="ECO:0007669"/>
    <property type="project" value="UniProtKB-UniRule"/>
</dbReference>
<dbReference type="GO" id="GO:0009102">
    <property type="term" value="P:biotin biosynthetic process"/>
    <property type="evidence" value="ECO:0007669"/>
    <property type="project" value="UniProtKB-UniRule"/>
</dbReference>
<dbReference type="CDD" id="cd01335">
    <property type="entry name" value="Radical_SAM"/>
    <property type="match status" value="1"/>
</dbReference>
<dbReference type="FunFam" id="3.20.20.70:FF:000011">
    <property type="entry name" value="Biotin synthase"/>
    <property type="match status" value="1"/>
</dbReference>
<dbReference type="Gene3D" id="3.20.20.70">
    <property type="entry name" value="Aldolase class I"/>
    <property type="match status" value="1"/>
</dbReference>
<dbReference type="HAMAP" id="MF_01694">
    <property type="entry name" value="BioB"/>
    <property type="match status" value="1"/>
</dbReference>
<dbReference type="InterPro" id="IPR013785">
    <property type="entry name" value="Aldolase_TIM"/>
</dbReference>
<dbReference type="InterPro" id="IPR010722">
    <property type="entry name" value="BATS_dom"/>
</dbReference>
<dbReference type="InterPro" id="IPR002684">
    <property type="entry name" value="Biotin_synth/BioAB"/>
</dbReference>
<dbReference type="InterPro" id="IPR024177">
    <property type="entry name" value="Biotin_synthase"/>
</dbReference>
<dbReference type="InterPro" id="IPR006638">
    <property type="entry name" value="Elp3/MiaA/NifB-like_rSAM"/>
</dbReference>
<dbReference type="InterPro" id="IPR007197">
    <property type="entry name" value="rSAM"/>
</dbReference>
<dbReference type="NCBIfam" id="TIGR00433">
    <property type="entry name" value="bioB"/>
    <property type="match status" value="1"/>
</dbReference>
<dbReference type="PANTHER" id="PTHR22976">
    <property type="entry name" value="BIOTIN SYNTHASE"/>
    <property type="match status" value="1"/>
</dbReference>
<dbReference type="PANTHER" id="PTHR22976:SF2">
    <property type="entry name" value="BIOTIN SYNTHASE, MITOCHONDRIAL"/>
    <property type="match status" value="1"/>
</dbReference>
<dbReference type="Pfam" id="PF06968">
    <property type="entry name" value="BATS"/>
    <property type="match status" value="1"/>
</dbReference>
<dbReference type="Pfam" id="PF04055">
    <property type="entry name" value="Radical_SAM"/>
    <property type="match status" value="1"/>
</dbReference>
<dbReference type="PIRSF" id="PIRSF001619">
    <property type="entry name" value="Biotin_synth"/>
    <property type="match status" value="1"/>
</dbReference>
<dbReference type="SFLD" id="SFLDF00272">
    <property type="entry name" value="biotin_synthase"/>
    <property type="match status" value="1"/>
</dbReference>
<dbReference type="SFLD" id="SFLDS00029">
    <property type="entry name" value="Radical_SAM"/>
    <property type="match status" value="1"/>
</dbReference>
<dbReference type="SMART" id="SM00876">
    <property type="entry name" value="BATS"/>
    <property type="match status" value="1"/>
</dbReference>
<dbReference type="SMART" id="SM00729">
    <property type="entry name" value="Elp3"/>
    <property type="match status" value="1"/>
</dbReference>
<dbReference type="SUPFAM" id="SSF102114">
    <property type="entry name" value="Radical SAM enzymes"/>
    <property type="match status" value="1"/>
</dbReference>
<dbReference type="PROSITE" id="PS51918">
    <property type="entry name" value="RADICAL_SAM"/>
    <property type="match status" value="1"/>
</dbReference>
<gene>
    <name evidence="1" type="primary">bioB</name>
    <name type="ordered locus">XCV0403</name>
</gene>
<evidence type="ECO:0000255" key="1">
    <source>
        <dbReference type="HAMAP-Rule" id="MF_01694"/>
    </source>
</evidence>
<evidence type="ECO:0000255" key="2">
    <source>
        <dbReference type="PROSITE-ProRule" id="PRU01266"/>
    </source>
</evidence>
<keyword id="KW-0001">2Fe-2S</keyword>
<keyword id="KW-0004">4Fe-4S</keyword>
<keyword id="KW-0093">Biotin biosynthesis</keyword>
<keyword id="KW-0408">Iron</keyword>
<keyword id="KW-0411">Iron-sulfur</keyword>
<keyword id="KW-0479">Metal-binding</keyword>
<keyword id="KW-0949">S-adenosyl-L-methionine</keyword>
<keyword id="KW-0808">Transferase</keyword>
<name>BIOB_XANE5</name>
<comment type="function">
    <text evidence="1">Catalyzes the conversion of dethiobiotin (DTB) to biotin by the insertion of a sulfur atom into dethiobiotin via a radical-based mechanism.</text>
</comment>
<comment type="catalytic activity">
    <reaction evidence="1">
        <text>(4R,5S)-dethiobiotin + (sulfur carrier)-SH + 2 reduced [2Fe-2S]-[ferredoxin] + 2 S-adenosyl-L-methionine = (sulfur carrier)-H + biotin + 2 5'-deoxyadenosine + 2 L-methionine + 2 oxidized [2Fe-2S]-[ferredoxin]</text>
        <dbReference type="Rhea" id="RHEA:22060"/>
        <dbReference type="Rhea" id="RHEA-COMP:10000"/>
        <dbReference type="Rhea" id="RHEA-COMP:10001"/>
        <dbReference type="Rhea" id="RHEA-COMP:14737"/>
        <dbReference type="Rhea" id="RHEA-COMP:14739"/>
        <dbReference type="ChEBI" id="CHEBI:17319"/>
        <dbReference type="ChEBI" id="CHEBI:29917"/>
        <dbReference type="ChEBI" id="CHEBI:33737"/>
        <dbReference type="ChEBI" id="CHEBI:33738"/>
        <dbReference type="ChEBI" id="CHEBI:57586"/>
        <dbReference type="ChEBI" id="CHEBI:57844"/>
        <dbReference type="ChEBI" id="CHEBI:59789"/>
        <dbReference type="ChEBI" id="CHEBI:64428"/>
        <dbReference type="ChEBI" id="CHEBI:149473"/>
        <dbReference type="EC" id="2.8.1.6"/>
    </reaction>
</comment>
<comment type="cofactor">
    <cofactor evidence="1">
        <name>[4Fe-4S] cluster</name>
        <dbReference type="ChEBI" id="CHEBI:49883"/>
    </cofactor>
    <text evidence="1">Binds 1 [4Fe-4S] cluster. The cluster is coordinated with 3 cysteines and an exchangeable S-adenosyl-L-methionine.</text>
</comment>
<comment type="cofactor">
    <cofactor evidence="1">
        <name>[2Fe-2S] cluster</name>
        <dbReference type="ChEBI" id="CHEBI:190135"/>
    </cofactor>
    <text evidence="1">Binds 1 [2Fe-2S] cluster. The cluster is coordinated with 3 cysteines and 1 arginine.</text>
</comment>
<comment type="pathway">
    <text evidence="1">Cofactor biosynthesis; biotin biosynthesis; biotin from 7,8-diaminononanoate: step 2/2.</text>
</comment>
<comment type="subunit">
    <text evidence="1">Homodimer.</text>
</comment>
<comment type="similarity">
    <text evidence="1">Belongs to the radical SAM superfamily. Biotin synthase family.</text>
</comment>
<protein>
    <recommendedName>
        <fullName evidence="1">Biotin synthase</fullName>
        <ecNumber evidence="1">2.8.1.6</ecNumber>
    </recommendedName>
</protein>